<feature type="chain" id="PRO_0000311282" description="Gamma-crystallin N">
    <location>
        <begin position="1"/>
        <end position="183"/>
    </location>
</feature>
<feature type="domain" description="Beta/gamma crystallin 'Greek key' 1" evidence="1">
    <location>
        <begin position="6"/>
        <end position="46"/>
    </location>
</feature>
<feature type="domain" description="Beta/gamma crystallin 'Greek key' 2" evidence="1">
    <location>
        <begin position="47"/>
        <end position="89"/>
    </location>
</feature>
<feature type="domain" description="Beta/gamma crystallin 'Greek key' 3" evidence="1">
    <location>
        <begin position="95"/>
        <end position="136"/>
    </location>
</feature>
<feature type="domain" description="Beta/gamma crystallin 'Greek key' 4" evidence="1">
    <location>
        <begin position="138"/>
        <end position="180"/>
    </location>
</feature>
<feature type="sequence conflict" description="In Ref. 1; AAL40969." evidence="4" ref="1">
    <original>Q</original>
    <variation>H</variation>
    <location>
        <position position="174"/>
    </location>
</feature>
<accession>Q8VHL5</accession>
<accession>Q0IJ73</accession>
<accession>Q0VAU5</accession>
<comment type="function">
    <text evidence="3 4">Crystallins are the dominant structural components of the vertebrate eye lens (Probable). Also plays an important role for integrity and function of auditory nuclei (PubMed:27517863).</text>
</comment>
<comment type="subunit">
    <text evidence="2">Monomer.</text>
</comment>
<comment type="tissue specificity">
    <text evidence="2 3">Primordially eye-specific. Present in lens nucleus. In the retina, expression in observed in the outer plexiform layer (containing photoreceptors axons and synapses) and photoreceptor outer segments (at protein level) (PubMed:15853812). Also detected in the auditory hindbrain where it is highly expressed in the medial nucleus of the trapezoid body, but also present in other nuclei of the superior olivary complex (PubMed:27517863).</text>
</comment>
<comment type="domain">
    <text evidence="4">Has a two-domain beta-structure, folded into four very similar Greek key motifs.</text>
</comment>
<comment type="similarity">
    <text evidence="4">Belongs to the beta/gamma-crystallin family.</text>
</comment>
<reference key="1">
    <citation type="journal article" date="2005" name="FEBS J.">
        <title>Gamma-N-crystallin and the evolution of the betagamma-crystallin superfamily in vertebrates.</title>
        <authorList>
            <person name="Wistow G."/>
            <person name="Wyatt K."/>
            <person name="David L."/>
            <person name="Gao C."/>
            <person name="Bateman O."/>
            <person name="Bernstein S."/>
            <person name="Tomarev S."/>
            <person name="Segovia L."/>
            <person name="Slingsby C."/>
            <person name="Vihtelic T."/>
        </authorList>
    </citation>
    <scope>NUCLEOTIDE SEQUENCE [MRNA]</scope>
    <scope>SUBUNIT</scope>
    <scope>TISSUE SPECIFICITY</scope>
    <source>
        <strain>C57BL/6J</strain>
        <tissue>Eye</tissue>
    </source>
</reference>
<reference key="2">
    <citation type="journal article" date="2004" name="Genome Res.">
        <title>The status, quality, and expansion of the NIH full-length cDNA project: the Mammalian Gene Collection (MGC).</title>
        <authorList>
            <consortium name="The MGC Project Team"/>
        </authorList>
    </citation>
    <scope>NUCLEOTIDE SEQUENCE [LARGE SCALE MRNA]</scope>
</reference>
<reference key="3">
    <citation type="journal article" date="2016" name="PLoS ONE">
        <title>Functional Role of gamma-Crystallin N in the Auditory Hindbrain.</title>
        <authorList>
            <person name="Hartwich H."/>
            <person name="Rosengauer E."/>
            <person name="Ruettiger L."/>
            <person name="Wilms V."/>
            <person name="Waterholter S.K."/>
            <person name="Nothwang H.G."/>
        </authorList>
    </citation>
    <scope>FUNCTION</scope>
    <scope>TISSUE SPECIFICITY</scope>
</reference>
<keyword id="KW-0273">Eye lens protein</keyword>
<keyword id="KW-1185">Reference proteome</keyword>
<keyword id="KW-0677">Repeat</keyword>
<name>CRGN_MOUSE</name>
<evidence type="ECO:0000255" key="1">
    <source>
        <dbReference type="PROSITE-ProRule" id="PRU00028"/>
    </source>
</evidence>
<evidence type="ECO:0000269" key="2">
    <source>
    </source>
</evidence>
<evidence type="ECO:0000269" key="3">
    <source>
    </source>
</evidence>
<evidence type="ECO:0000305" key="4"/>
<evidence type="ECO:0000312" key="5">
    <source>
        <dbReference type="MGI" id="MGI:2449167"/>
    </source>
</evidence>
<dbReference type="EMBL" id="AF445456">
    <property type="protein sequence ID" value="AAL40969.1"/>
    <property type="molecule type" value="mRNA"/>
</dbReference>
<dbReference type="EMBL" id="BC120913">
    <property type="protein sequence ID" value="AAI20914.1"/>
    <property type="molecule type" value="mRNA"/>
</dbReference>
<dbReference type="EMBL" id="BC120914">
    <property type="protein sequence ID" value="AAI20915.1"/>
    <property type="molecule type" value="mRNA"/>
</dbReference>
<dbReference type="CCDS" id="CCDS19129.1"/>
<dbReference type="RefSeq" id="NP_694716.2">
    <property type="nucleotide sequence ID" value="NM_153076.3"/>
</dbReference>
<dbReference type="SMR" id="Q8VHL5"/>
<dbReference type="FunCoup" id="Q8VHL5">
    <property type="interactions" value="1"/>
</dbReference>
<dbReference type="STRING" id="10090.ENSMUSP00000035860"/>
<dbReference type="PhosphoSitePlus" id="Q8VHL5"/>
<dbReference type="PaxDb" id="10090-ENSMUSP00000035860"/>
<dbReference type="ProteomicsDB" id="277894"/>
<dbReference type="Antibodypedia" id="64394">
    <property type="antibodies" value="44 antibodies from 15 providers"/>
</dbReference>
<dbReference type="DNASU" id="214301"/>
<dbReference type="Ensembl" id="ENSMUST00000047119.5">
    <property type="protein sequence ID" value="ENSMUSP00000035860.5"/>
    <property type="gene ID" value="ENSMUSG00000038135.5"/>
</dbReference>
<dbReference type="GeneID" id="214301"/>
<dbReference type="KEGG" id="mmu:214301"/>
<dbReference type="UCSC" id="uc008wsi.2">
    <property type="organism name" value="mouse"/>
</dbReference>
<dbReference type="AGR" id="MGI:2449167"/>
<dbReference type="CTD" id="155051"/>
<dbReference type="MGI" id="MGI:2449167">
    <property type="gene designation" value="Crygn"/>
</dbReference>
<dbReference type="VEuPathDB" id="HostDB:ENSMUSG00000038135"/>
<dbReference type="eggNOG" id="ENOG502QV8X">
    <property type="taxonomic scope" value="Eukaryota"/>
</dbReference>
<dbReference type="GeneTree" id="ENSGT00940000159301"/>
<dbReference type="HOGENOM" id="CLU_081883_1_0_1"/>
<dbReference type="InParanoid" id="Q8VHL5"/>
<dbReference type="OMA" id="WQAHSAN"/>
<dbReference type="OrthoDB" id="5976022at2759"/>
<dbReference type="PhylomeDB" id="Q8VHL5"/>
<dbReference type="BioGRID-ORCS" id="214301">
    <property type="hits" value="2 hits in 77 CRISPR screens"/>
</dbReference>
<dbReference type="ChiTaRS" id="Crygn">
    <property type="organism name" value="mouse"/>
</dbReference>
<dbReference type="PRO" id="PR:Q8VHL5"/>
<dbReference type="Proteomes" id="UP000000589">
    <property type="component" value="Chromosome 5"/>
</dbReference>
<dbReference type="RNAct" id="Q8VHL5">
    <property type="molecule type" value="protein"/>
</dbReference>
<dbReference type="Bgee" id="ENSMUSG00000038135">
    <property type="expression patterns" value="Expressed in lens of camera-type eye and 57 other cell types or tissues"/>
</dbReference>
<dbReference type="GO" id="GO:0005212">
    <property type="term" value="F:structural constituent of eye lens"/>
    <property type="evidence" value="ECO:0007669"/>
    <property type="project" value="UniProtKB-KW"/>
</dbReference>
<dbReference type="GO" id="GO:0001654">
    <property type="term" value="P:eye development"/>
    <property type="evidence" value="ECO:0007669"/>
    <property type="project" value="UniProtKB-ARBA"/>
</dbReference>
<dbReference type="FunFam" id="2.60.20.10:FF:000007">
    <property type="entry name" value="Crystallin gamma N"/>
    <property type="match status" value="1"/>
</dbReference>
<dbReference type="FunFam" id="2.60.20.10:FF:000003">
    <property type="entry name" value="Crystallin gamma S"/>
    <property type="match status" value="1"/>
</dbReference>
<dbReference type="Gene3D" id="2.60.20.10">
    <property type="entry name" value="Crystallins"/>
    <property type="match status" value="2"/>
</dbReference>
<dbReference type="InterPro" id="IPR050252">
    <property type="entry name" value="Beta/Gamma-Crystallin"/>
</dbReference>
<dbReference type="InterPro" id="IPR001064">
    <property type="entry name" value="Beta/gamma_crystallin"/>
</dbReference>
<dbReference type="InterPro" id="IPR011024">
    <property type="entry name" value="G_crystallin-like"/>
</dbReference>
<dbReference type="PANTHER" id="PTHR11818">
    <property type="entry name" value="BETA/GAMMA CRYSTALLIN"/>
    <property type="match status" value="1"/>
</dbReference>
<dbReference type="PANTHER" id="PTHR11818:SF22">
    <property type="entry name" value="GAMMA-CRYSTALLIN N"/>
    <property type="match status" value="1"/>
</dbReference>
<dbReference type="Pfam" id="PF00030">
    <property type="entry name" value="Crystall"/>
    <property type="match status" value="2"/>
</dbReference>
<dbReference type="PRINTS" id="PR01367">
    <property type="entry name" value="BGCRYSTALLIN"/>
</dbReference>
<dbReference type="SMART" id="SM00247">
    <property type="entry name" value="XTALbg"/>
    <property type="match status" value="2"/>
</dbReference>
<dbReference type="SUPFAM" id="SSF49695">
    <property type="entry name" value="gamma-Crystallin-like"/>
    <property type="match status" value="1"/>
</dbReference>
<dbReference type="PROSITE" id="PS50915">
    <property type="entry name" value="CRYSTALLIN_BETA_GAMMA"/>
    <property type="match status" value="4"/>
</dbReference>
<protein>
    <recommendedName>
        <fullName evidence="4">Gamma-crystallin N</fullName>
    </recommendedName>
    <alternativeName>
        <fullName evidence="4">Gamma-N-crystallin</fullName>
    </alternativeName>
</protein>
<proteinExistence type="evidence at protein level"/>
<sequence>MAQRSGKITLYEGKHFTGRKLEVFGDCDNFQDQGFMNRVNSIRVESGAWVCFDHPDFRGQQFILEHGDYPEFFRWNGHNDHMGSCRPVGMHGEHFRIDIFEGCNFTGQCLEFVEDCPFLQSRGWAKSCVNAIKVYGDGAWVLYEEPNYRGRMYVLERGDYRCFSDWGAHSARVQSLRRVLNFF</sequence>
<gene>
    <name evidence="5" type="primary">Crygn</name>
</gene>
<organism>
    <name type="scientific">Mus musculus</name>
    <name type="common">Mouse</name>
    <dbReference type="NCBI Taxonomy" id="10090"/>
    <lineage>
        <taxon>Eukaryota</taxon>
        <taxon>Metazoa</taxon>
        <taxon>Chordata</taxon>
        <taxon>Craniata</taxon>
        <taxon>Vertebrata</taxon>
        <taxon>Euteleostomi</taxon>
        <taxon>Mammalia</taxon>
        <taxon>Eutheria</taxon>
        <taxon>Euarchontoglires</taxon>
        <taxon>Glires</taxon>
        <taxon>Rodentia</taxon>
        <taxon>Myomorpha</taxon>
        <taxon>Muroidea</taxon>
        <taxon>Muridae</taxon>
        <taxon>Murinae</taxon>
        <taxon>Mus</taxon>
        <taxon>Mus</taxon>
    </lineage>
</organism>